<dbReference type="EMBL" id="CP000681">
    <property type="protein sequence ID" value="ABP75407.1"/>
    <property type="molecule type" value="Genomic_DNA"/>
</dbReference>
<dbReference type="SMR" id="A4Y624"/>
<dbReference type="STRING" id="319224.Sputcn32_1682"/>
<dbReference type="KEGG" id="spc:Sputcn32_1682"/>
<dbReference type="eggNOG" id="COG3067">
    <property type="taxonomic scope" value="Bacteria"/>
</dbReference>
<dbReference type="HOGENOM" id="CLU_041110_0_0_6"/>
<dbReference type="GO" id="GO:0005886">
    <property type="term" value="C:plasma membrane"/>
    <property type="evidence" value="ECO:0007669"/>
    <property type="project" value="UniProtKB-SubCell"/>
</dbReference>
<dbReference type="GO" id="GO:0015385">
    <property type="term" value="F:sodium:proton antiporter activity"/>
    <property type="evidence" value="ECO:0007669"/>
    <property type="project" value="InterPro"/>
</dbReference>
<dbReference type="HAMAP" id="MF_01599">
    <property type="entry name" value="NhaB"/>
    <property type="match status" value="1"/>
</dbReference>
<dbReference type="InterPro" id="IPR004671">
    <property type="entry name" value="Na+/H+_antiporter_NhaB"/>
</dbReference>
<dbReference type="NCBIfam" id="TIGR00774">
    <property type="entry name" value="NhaB"/>
    <property type="match status" value="1"/>
</dbReference>
<dbReference type="NCBIfam" id="NF007093">
    <property type="entry name" value="PRK09547.1"/>
    <property type="match status" value="1"/>
</dbReference>
<dbReference type="PANTHER" id="PTHR43302:SF1">
    <property type="entry name" value="NA(+)_H(+) ANTIPORTER NHAB"/>
    <property type="match status" value="1"/>
</dbReference>
<dbReference type="PANTHER" id="PTHR43302">
    <property type="entry name" value="TRANSPORTER ARSB-RELATED"/>
    <property type="match status" value="1"/>
</dbReference>
<dbReference type="Pfam" id="PF06450">
    <property type="entry name" value="NhaB"/>
    <property type="match status" value="1"/>
</dbReference>
<name>NHAB_SHEPC</name>
<reference key="1">
    <citation type="submission" date="2007-04" db="EMBL/GenBank/DDBJ databases">
        <title>Complete sequence of Shewanella putrefaciens CN-32.</title>
        <authorList>
            <consortium name="US DOE Joint Genome Institute"/>
            <person name="Copeland A."/>
            <person name="Lucas S."/>
            <person name="Lapidus A."/>
            <person name="Barry K."/>
            <person name="Detter J.C."/>
            <person name="Glavina del Rio T."/>
            <person name="Hammon N."/>
            <person name="Israni S."/>
            <person name="Dalin E."/>
            <person name="Tice H."/>
            <person name="Pitluck S."/>
            <person name="Chain P."/>
            <person name="Malfatti S."/>
            <person name="Shin M."/>
            <person name="Vergez L."/>
            <person name="Schmutz J."/>
            <person name="Larimer F."/>
            <person name="Land M."/>
            <person name="Hauser L."/>
            <person name="Kyrpides N."/>
            <person name="Mikhailova N."/>
            <person name="Romine M.F."/>
            <person name="Fredrickson J."/>
            <person name="Tiedje J."/>
            <person name="Richardson P."/>
        </authorList>
    </citation>
    <scope>NUCLEOTIDE SEQUENCE [LARGE SCALE GENOMIC DNA]</scope>
    <source>
        <strain>CN-32 / ATCC BAA-453</strain>
    </source>
</reference>
<comment type="function">
    <text evidence="1">Na(+)/H(+) antiporter that extrudes sodium in exchange for external protons.</text>
</comment>
<comment type="catalytic activity">
    <reaction evidence="1">
        <text>2 Na(+)(in) + 3 H(+)(out) = 2 Na(+)(out) + 3 H(+)(in)</text>
        <dbReference type="Rhea" id="RHEA:29247"/>
        <dbReference type="ChEBI" id="CHEBI:15378"/>
        <dbReference type="ChEBI" id="CHEBI:29101"/>
    </reaction>
    <physiologicalReaction direction="left-to-right" evidence="1">
        <dbReference type="Rhea" id="RHEA:29248"/>
    </physiologicalReaction>
</comment>
<comment type="subcellular location">
    <subcellularLocation>
        <location evidence="1">Cell inner membrane</location>
        <topology evidence="1">Multi-pass membrane protein</topology>
    </subcellularLocation>
</comment>
<comment type="similarity">
    <text evidence="1">Belongs to the NhaB Na(+)/H(+) (TC 2.A.34) antiporter family.</text>
</comment>
<gene>
    <name evidence="1" type="primary">nhaB</name>
    <name type="ordered locus">Sputcn32_1682</name>
</gene>
<sequence>MPLTMSQAFIGNFLGNSPKWYKIAILSFLIINPILFFYVSPFVAGWVLVLEFIFTLAMALKCYPLQPGGLLAIEAVAIGMTSANQVLHEIEANLEVLLLLVFMVAGIYFMKQLLLFAFTKIITKVRSKILVSLMFCLTSAFLSAFLDALTVIAVIIAVAVGFYAIYHKVASGKDFSAVHDHTSESNNQLNNSELESFRGFLRNLLMHAGVGTALGGVCTMVGEPQNLIIAAQANWQFGEFVIRMSPVTVPVLIAGILTCLLVEKFRIFGYGAKLPDAVHKILCDYAAHEDAHRTNKDKMKLVIQVLVGVWLIAGLALHLASVGLVGLSVIILTTAFNGITDEHALGKAFEEALPFTALLAVFFAVVAVIIDQHLFAPVIQWALSYEGNTQLVIFYIANGLLSMVSDNVFVGTVYINEVKAALIDGQITRDQFDLLAVAINTGTNLPSVATPNGQAAFLFLLTSALAPLIRLSYGRMVWMALPYTIVLSVVGVLAIETGFLEQATQYFYDSHMIIHHSAKDVIAPLTSH</sequence>
<keyword id="KW-0050">Antiport</keyword>
<keyword id="KW-0997">Cell inner membrane</keyword>
<keyword id="KW-1003">Cell membrane</keyword>
<keyword id="KW-0406">Ion transport</keyword>
<keyword id="KW-0472">Membrane</keyword>
<keyword id="KW-0915">Sodium</keyword>
<keyword id="KW-0739">Sodium transport</keyword>
<keyword id="KW-0812">Transmembrane</keyword>
<keyword id="KW-1133">Transmembrane helix</keyword>
<keyword id="KW-0813">Transport</keyword>
<organism>
    <name type="scientific">Shewanella putrefaciens (strain CN-32 / ATCC BAA-453)</name>
    <dbReference type="NCBI Taxonomy" id="319224"/>
    <lineage>
        <taxon>Bacteria</taxon>
        <taxon>Pseudomonadati</taxon>
        <taxon>Pseudomonadota</taxon>
        <taxon>Gammaproteobacteria</taxon>
        <taxon>Alteromonadales</taxon>
        <taxon>Shewanellaceae</taxon>
        <taxon>Shewanella</taxon>
    </lineage>
</organism>
<feature type="chain" id="PRO_0000333133" description="Na(+)/H(+) antiporter NhaB">
    <location>
        <begin position="1"/>
        <end position="528"/>
    </location>
</feature>
<feature type="transmembrane region" description="Helical" evidence="1">
    <location>
        <begin position="10"/>
        <end position="30"/>
    </location>
</feature>
<feature type="transmembrane region" description="Helical" evidence="1">
    <location>
        <begin position="63"/>
        <end position="83"/>
    </location>
</feature>
<feature type="transmembrane region" description="Helical" evidence="1">
    <location>
        <begin position="96"/>
        <end position="116"/>
    </location>
</feature>
<feature type="transmembrane region" description="Helical" evidence="1">
    <location>
        <begin position="131"/>
        <end position="165"/>
    </location>
</feature>
<feature type="transmembrane region" description="Helical" evidence="1">
    <location>
        <begin position="204"/>
        <end position="224"/>
    </location>
</feature>
<feature type="transmembrane region" description="Helical" evidence="1">
    <location>
        <begin position="240"/>
        <end position="260"/>
    </location>
</feature>
<feature type="transmembrane region" description="Helical" evidence="1">
    <location>
        <begin position="305"/>
        <end position="325"/>
    </location>
</feature>
<feature type="transmembrane region" description="Helical" evidence="1">
    <location>
        <begin position="359"/>
        <end position="379"/>
    </location>
</feature>
<feature type="transmembrane region" description="Helical" evidence="1">
    <location>
        <begin position="391"/>
        <end position="411"/>
    </location>
</feature>
<feature type="transmembrane region" description="Helical" evidence="1">
    <location>
        <begin position="449"/>
        <end position="469"/>
    </location>
</feature>
<feature type="transmembrane region" description="Helical" evidence="1">
    <location>
        <begin position="476"/>
        <end position="496"/>
    </location>
</feature>
<evidence type="ECO:0000255" key="1">
    <source>
        <dbReference type="HAMAP-Rule" id="MF_01599"/>
    </source>
</evidence>
<proteinExistence type="inferred from homology"/>
<protein>
    <recommendedName>
        <fullName evidence="1">Na(+)/H(+) antiporter NhaB</fullName>
    </recommendedName>
    <alternativeName>
        <fullName evidence="1">Sodium/proton antiporter NhaB</fullName>
    </alternativeName>
</protein>
<accession>A4Y624</accession>